<organism>
    <name type="scientific">Crotalus lutosus abyssus</name>
    <name type="common">Grand Canyon rattlesnake</name>
    <name type="synonym">Crotalus oreganus abyssus</name>
    <dbReference type="NCBI Taxonomy" id="128077"/>
    <lineage>
        <taxon>Eukaryota</taxon>
        <taxon>Metazoa</taxon>
        <taxon>Chordata</taxon>
        <taxon>Craniata</taxon>
        <taxon>Vertebrata</taxon>
        <taxon>Euteleostomi</taxon>
        <taxon>Lepidosauria</taxon>
        <taxon>Squamata</taxon>
        <taxon>Bifurcata</taxon>
        <taxon>Unidentata</taxon>
        <taxon>Episquamata</taxon>
        <taxon>Toxicofera</taxon>
        <taxon>Serpentes</taxon>
        <taxon>Colubroidea</taxon>
        <taxon>Viperidae</taxon>
        <taxon>Crotalinae</taxon>
        <taxon>Crotalus</taxon>
    </lineage>
</organism>
<accession>P0DUP2</accession>
<reference key="1">
    <citation type="journal article" date="2016" name="Toxicon">
        <title>CoaTx-II, a new dimeric Lys49 phospholipase A2 from Crotalus oreganus abyssus snake venom with bactericidal potential: insights into its structure and biological roles.</title>
        <authorList>
            <person name="Almeida J.R."/>
            <person name="Lancellotti M."/>
            <person name="Soares A.M."/>
            <person name="Calderon L.A."/>
            <person name="Ramirez D."/>
            <person name="Gonzalez W."/>
            <person name="Marangoni S."/>
            <person name="Da Silva S.L."/>
        </authorList>
    </citation>
    <scope>PROTEIN SEQUENCE</scope>
    <scope>FUNCTION</scope>
    <scope>SUBCELLULAR LOCATION</scope>
    <scope>SUBUNIT</scope>
    <scope>MASS SPECTROMETRY</scope>
    <scope>3D-STRUCTURE MODELING</scope>
    <source>
        <tissue>Venom</tissue>
    </source>
</reference>
<protein>
    <recommendedName>
        <fullName evidence="5">Basic phospholipase A2 CoaTx-II</fullName>
        <shortName>svPLA2 homolog</shortName>
    </recommendedName>
    <alternativeName>
        <fullName>Lys49 PLA2-like</fullName>
    </alternativeName>
</protein>
<evidence type="ECO:0000250" key="1">
    <source>
        <dbReference type="UniProtKB" id="I6L8L6"/>
    </source>
</evidence>
<evidence type="ECO:0000250" key="2">
    <source>
        <dbReference type="UniProtKB" id="P24605"/>
    </source>
</evidence>
<evidence type="ECO:0000250" key="3">
    <source>
        <dbReference type="UniProtKB" id="Q90249"/>
    </source>
</evidence>
<evidence type="ECO:0000269" key="4">
    <source>
    </source>
</evidence>
<evidence type="ECO:0000303" key="5">
    <source>
    </source>
</evidence>
<evidence type="ECO:0000305" key="6"/>
<evidence type="ECO:0000305" key="7">
    <source>
    </source>
</evidence>
<dbReference type="SMR" id="P0DUP2"/>
<dbReference type="GO" id="GO:0005576">
    <property type="term" value="C:extracellular region"/>
    <property type="evidence" value="ECO:0007669"/>
    <property type="project" value="UniProtKB-SubCell"/>
</dbReference>
<dbReference type="GO" id="GO:0005509">
    <property type="term" value="F:calcium ion binding"/>
    <property type="evidence" value="ECO:0007669"/>
    <property type="project" value="InterPro"/>
</dbReference>
<dbReference type="GO" id="GO:0047498">
    <property type="term" value="F:calcium-dependent phospholipase A2 activity"/>
    <property type="evidence" value="ECO:0007669"/>
    <property type="project" value="TreeGrafter"/>
</dbReference>
<dbReference type="GO" id="GO:0005543">
    <property type="term" value="F:phospholipid binding"/>
    <property type="evidence" value="ECO:0007669"/>
    <property type="project" value="TreeGrafter"/>
</dbReference>
<dbReference type="GO" id="GO:0090729">
    <property type="term" value="F:toxin activity"/>
    <property type="evidence" value="ECO:0007669"/>
    <property type="project" value="UniProtKB-KW"/>
</dbReference>
<dbReference type="GO" id="GO:0050482">
    <property type="term" value="P:arachidonate secretion"/>
    <property type="evidence" value="ECO:0007669"/>
    <property type="project" value="InterPro"/>
</dbReference>
<dbReference type="GO" id="GO:0042742">
    <property type="term" value="P:defense response to bacterium"/>
    <property type="evidence" value="ECO:0007669"/>
    <property type="project" value="UniProtKB-KW"/>
</dbReference>
<dbReference type="GO" id="GO:0016042">
    <property type="term" value="P:lipid catabolic process"/>
    <property type="evidence" value="ECO:0007669"/>
    <property type="project" value="InterPro"/>
</dbReference>
<dbReference type="GO" id="GO:0042130">
    <property type="term" value="P:negative regulation of T cell proliferation"/>
    <property type="evidence" value="ECO:0007669"/>
    <property type="project" value="TreeGrafter"/>
</dbReference>
<dbReference type="GO" id="GO:0006644">
    <property type="term" value="P:phospholipid metabolic process"/>
    <property type="evidence" value="ECO:0007669"/>
    <property type="project" value="InterPro"/>
</dbReference>
<dbReference type="CDD" id="cd00125">
    <property type="entry name" value="PLA2c"/>
    <property type="match status" value="1"/>
</dbReference>
<dbReference type="FunFam" id="1.20.90.10:FF:000001">
    <property type="entry name" value="Basic phospholipase A2 homolog"/>
    <property type="match status" value="1"/>
</dbReference>
<dbReference type="Gene3D" id="1.20.90.10">
    <property type="entry name" value="Phospholipase A2 domain"/>
    <property type="match status" value="1"/>
</dbReference>
<dbReference type="InterPro" id="IPR001211">
    <property type="entry name" value="PLipase_A2"/>
</dbReference>
<dbReference type="InterPro" id="IPR033112">
    <property type="entry name" value="PLipase_A2_Asp_AS"/>
</dbReference>
<dbReference type="InterPro" id="IPR016090">
    <property type="entry name" value="PLipase_A2_dom"/>
</dbReference>
<dbReference type="InterPro" id="IPR036444">
    <property type="entry name" value="PLipase_A2_dom_sf"/>
</dbReference>
<dbReference type="InterPro" id="IPR033113">
    <property type="entry name" value="PLipase_A2_His_AS"/>
</dbReference>
<dbReference type="PANTHER" id="PTHR11716">
    <property type="entry name" value="PHOSPHOLIPASE A2 FAMILY MEMBER"/>
    <property type="match status" value="1"/>
</dbReference>
<dbReference type="PANTHER" id="PTHR11716:SF9">
    <property type="entry name" value="PHOSPHOLIPASE A2, MEMBRANE ASSOCIATED"/>
    <property type="match status" value="1"/>
</dbReference>
<dbReference type="Pfam" id="PF00068">
    <property type="entry name" value="Phospholip_A2_1"/>
    <property type="match status" value="1"/>
</dbReference>
<dbReference type="PRINTS" id="PR00389">
    <property type="entry name" value="PHPHLIPASEA2"/>
</dbReference>
<dbReference type="SMART" id="SM00085">
    <property type="entry name" value="PA2c"/>
    <property type="match status" value="1"/>
</dbReference>
<dbReference type="SUPFAM" id="SSF48619">
    <property type="entry name" value="Phospholipase A2, PLA2"/>
    <property type="match status" value="1"/>
</dbReference>
<dbReference type="PROSITE" id="PS00119">
    <property type="entry name" value="PA2_ASP"/>
    <property type="match status" value="1"/>
</dbReference>
<dbReference type="PROSITE" id="PS00118">
    <property type="entry name" value="PA2_HIS"/>
    <property type="match status" value="1"/>
</dbReference>
<proteinExistence type="evidence at protein level"/>
<name>PA2H2_CROLY</name>
<keyword id="KW-0044">Antibiotic</keyword>
<keyword id="KW-0929">Antimicrobial</keyword>
<keyword id="KW-0903">Direct protein sequencing</keyword>
<keyword id="KW-1015">Disulfide bond</keyword>
<keyword id="KW-0959">Myotoxin</keyword>
<keyword id="KW-0964">Secreted</keyword>
<keyword id="KW-0800">Toxin</keyword>
<comment type="function">
    <text evidence="1 4">Snake venom phospholipase A2 (PLA2) that lacks enzymatic inactivity (PubMed:27530662). It shows antibacterial activity against both Gram-negative and Gram-positive bacteria, including methicillin-resistant strains (PubMed:27530662). In vivo, it causes local muscular damage, but no systemic damage (intravenous administration does not elevate plasma creatine kinase). Also causes an inflammatory activity that is demonstrated by mice paw edema induction and pro-inflammatory cytokine IL-6 elevation (PubMed:27530662). A model of myotoxic mechanism has been proposed: an apo Lys49-PLA2 is activated by the entrance of a hydrophobic molecule (e.g. fatty acid) at the hydrophobic channel of the protein leading to a reorientation of a monomer (By similarity). This reorientation causes a transition between 'inactive' to 'active' states, causing alignment of C-terminal and membrane-docking sites (MDoS) side-by-side and putting the membrane-disruption sites (MDiS) in the same plane, exposed to solvent and in a symmetric position for both monomers (By similarity). The MDoS region stabilizes the toxin on membrane by the interaction of charged residues with phospholipid head groups (By similarity). Subsequently, the MDiS region destabilizes the membrane with penetration of hydrophobic residues (By similarity). This insertion causes a disorganization of the membrane, allowing an uncontrolled influx of ions (i.e. calcium and sodium), and eventually triggering irreversible intracellular alterations and cell death (By similarity).</text>
</comment>
<comment type="subunit">
    <text evidence="4">Homodimer; non-covalently-linked.</text>
</comment>
<comment type="subcellular location">
    <subcellularLocation>
        <location evidence="4">Secreted</location>
    </subcellularLocation>
</comment>
<comment type="tissue specificity">
    <text evidence="7">Expressed by the venom gland.</text>
</comment>
<comment type="mass spectrometry">
    <text>Monomeric form.</text>
</comment>
<comment type="similarity">
    <text evidence="6">Belongs to the phospholipase A2 family. Group II subfamily. K49 sub-subfamily.</text>
</comment>
<comment type="caution">
    <text evidence="6">Does not bind calcium as one of the calcium-binding sites is lost (Asp-&gt;Lys in position 48, which corresponds to 'Lys-49' in the current nomenclature).</text>
</comment>
<sequence>SLVELGKMILQETGKNAIPSYGFYGCNCGWGGRGKPKDATDRCCFVHKCCYKKLTDCDPKTDIYSYSWKNKTIICDVNNPCLKEMCECDKAVAICLRENLDTYNKKYRIYPKFLCKKPDTC</sequence>
<feature type="chain" id="PRO_0000452903" description="Basic phospholipase A2 CoaTx-II">
    <location>
        <begin position="1"/>
        <end position="121"/>
    </location>
</feature>
<feature type="region of interest" description="Important for membrane-damaging activities in eukaryotes and bacteria; heparin-binding" evidence="2">
    <location>
        <begin position="105"/>
        <end position="117"/>
    </location>
</feature>
<feature type="site" description="Important residue of the cationic membrane-docking site (MDoS)" evidence="1">
    <location>
        <position position="105"/>
    </location>
</feature>
<feature type="site" description="Important residue of the cationic membrane-docking site (MDoS)" evidence="1">
    <location>
        <position position="108"/>
    </location>
</feature>
<feature type="site" description="Cationic membrane-docking site (MDoS)" evidence="1">
    <location>
        <position position="112"/>
    </location>
</feature>
<feature type="site" description="Hydrophobic membrane-disruption site (MDiS)" evidence="1">
    <location>
        <position position="114"/>
    </location>
</feature>
<feature type="site" description="Cationic membrane-docking site (MDoS)" evidence="1">
    <location>
        <position position="117"/>
    </location>
</feature>
<feature type="disulfide bond" evidence="3">
    <location>
        <begin position="26"/>
        <end position="115"/>
    </location>
</feature>
<feature type="disulfide bond" evidence="3">
    <location>
        <begin position="28"/>
        <end position="44"/>
    </location>
</feature>
<feature type="disulfide bond" evidence="3">
    <location>
        <begin position="43"/>
        <end position="95"/>
    </location>
</feature>
<feature type="disulfide bond" evidence="3">
    <location>
        <begin position="49"/>
        <end position="121"/>
    </location>
</feature>
<feature type="disulfide bond" evidence="3">
    <location>
        <begin position="50"/>
        <end position="88"/>
    </location>
</feature>
<feature type="disulfide bond" evidence="3">
    <location>
        <begin position="57"/>
        <end position="81"/>
    </location>
</feature>
<feature type="disulfide bond" evidence="3">
    <location>
        <begin position="75"/>
        <end position="86"/>
    </location>
</feature>